<proteinExistence type="inferred from homology"/>
<evidence type="ECO:0000255" key="1">
    <source>
        <dbReference type="HAMAP-Rule" id="MF_03103"/>
    </source>
</evidence>
<evidence type="ECO:0000256" key="2">
    <source>
        <dbReference type="SAM" id="MobiDB-lite"/>
    </source>
</evidence>
<sequence>MTEIDPNINEQEMAEVINSDKDIDSDSNTVGLTLFAQLQNQLRLQQEELLQQQRELLSQESHLQLLQSSHSSISNTWNFTQGLVVGQLSVIFLIIIFVKFFVFADSSSSIPSKFVARDGAGVIVRRDNKSTTSRDRHNGIGGKDSNLEPSTDDERLQNNRAKVSSILEKTYYDVNNHASESLDWFNVLIAQTISHLRTEALLSDNIYHSLSNFLDNSELPDFLDKINLTEIDVGDDFPIFSNCRIKHSKEDTGRLEAKIDVDLSDTLTLGMETKLLLNYPRPLTAILPVAMTVSIVRFSGCLTVSLVNTNDQEFQADQVARPSNGHTSTDNGNDENGKGSSSEDKKGGTALMFSFAPDYRLEFVVKSLIGSRAKLQDVPKISSLIENRLRTWFIERCVEPRFQVVKLPSLWPRTKNTREPAKPKDSDDTL</sequence>
<protein>
    <recommendedName>
        <fullName evidence="1">Maintenance of mitochondrial morphology protein 1</fullName>
    </recommendedName>
</protein>
<keyword id="KW-0256">Endoplasmic reticulum</keyword>
<keyword id="KW-0445">Lipid transport</keyword>
<keyword id="KW-0446">Lipid-binding</keyword>
<keyword id="KW-0472">Membrane</keyword>
<keyword id="KW-1185">Reference proteome</keyword>
<keyword id="KW-0812">Transmembrane</keyword>
<keyword id="KW-1133">Transmembrane helix</keyword>
<keyword id="KW-0813">Transport</keyword>
<feature type="chain" id="PRO_0000384234" description="Maintenance of mitochondrial morphology protein 1">
    <location>
        <begin position="1"/>
        <end position="430"/>
    </location>
</feature>
<feature type="topological domain" description="Lumenal" evidence="1">
    <location>
        <begin position="1"/>
        <end position="82"/>
    </location>
</feature>
<feature type="transmembrane region" description="Helical" evidence="1">
    <location>
        <begin position="83"/>
        <end position="103"/>
    </location>
</feature>
<feature type="topological domain" description="Cytoplasmic" evidence="1">
    <location>
        <begin position="104"/>
        <end position="430"/>
    </location>
</feature>
<feature type="domain" description="SMP-LTD" evidence="1">
    <location>
        <begin position="178"/>
        <end position="408"/>
    </location>
</feature>
<feature type="region of interest" description="Disordered" evidence="2">
    <location>
        <begin position="126"/>
        <end position="154"/>
    </location>
</feature>
<feature type="region of interest" description="Disordered" evidence="2">
    <location>
        <begin position="315"/>
        <end position="346"/>
    </location>
</feature>
<feature type="compositionally biased region" description="Basic and acidic residues" evidence="2">
    <location>
        <begin position="126"/>
        <end position="138"/>
    </location>
</feature>
<feature type="compositionally biased region" description="Basic and acidic residues" evidence="2">
    <location>
        <begin position="335"/>
        <end position="346"/>
    </location>
</feature>
<dbReference type="EMBL" id="CH981529">
    <property type="protein sequence ID" value="EDK46090.1"/>
    <property type="molecule type" value="Genomic_DNA"/>
</dbReference>
<dbReference type="RefSeq" id="XP_001524299.1">
    <property type="nucleotide sequence ID" value="XM_001524249.1"/>
</dbReference>
<dbReference type="SMR" id="A5E3T2"/>
<dbReference type="FunCoup" id="A5E3T2">
    <property type="interactions" value="78"/>
</dbReference>
<dbReference type="STRING" id="379508.A5E3T2"/>
<dbReference type="GeneID" id="5231595"/>
<dbReference type="KEGG" id="lel:PVL30_003996"/>
<dbReference type="VEuPathDB" id="FungiDB:LELG_04270"/>
<dbReference type="eggNOG" id="ENOG502QUUW">
    <property type="taxonomic scope" value="Eukaryota"/>
</dbReference>
<dbReference type="HOGENOM" id="CLU_032730_2_0_1"/>
<dbReference type="InParanoid" id="A5E3T2"/>
<dbReference type="OMA" id="WSFTQGL"/>
<dbReference type="OrthoDB" id="5599157at2759"/>
<dbReference type="Proteomes" id="UP000001996">
    <property type="component" value="Unassembled WGS sequence"/>
</dbReference>
<dbReference type="GO" id="GO:0005789">
    <property type="term" value="C:endoplasmic reticulum membrane"/>
    <property type="evidence" value="ECO:0007669"/>
    <property type="project" value="UniProtKB-SubCell"/>
</dbReference>
<dbReference type="GO" id="GO:0032865">
    <property type="term" value="C:ERMES complex"/>
    <property type="evidence" value="ECO:0007669"/>
    <property type="project" value="UniProtKB-UniRule"/>
</dbReference>
<dbReference type="GO" id="GO:0008289">
    <property type="term" value="F:lipid binding"/>
    <property type="evidence" value="ECO:0007669"/>
    <property type="project" value="UniProtKB-KW"/>
</dbReference>
<dbReference type="GO" id="GO:0000002">
    <property type="term" value="P:mitochondrial genome maintenance"/>
    <property type="evidence" value="ECO:0007669"/>
    <property type="project" value="UniProtKB-UniRule"/>
</dbReference>
<dbReference type="GO" id="GO:1990456">
    <property type="term" value="P:mitochondrion-endoplasmic reticulum membrane tethering"/>
    <property type="evidence" value="ECO:0007669"/>
    <property type="project" value="TreeGrafter"/>
</dbReference>
<dbReference type="GO" id="GO:0015914">
    <property type="term" value="P:phospholipid transport"/>
    <property type="evidence" value="ECO:0007669"/>
    <property type="project" value="TreeGrafter"/>
</dbReference>
<dbReference type="GO" id="GO:0045040">
    <property type="term" value="P:protein insertion into mitochondrial outer membrane"/>
    <property type="evidence" value="ECO:0007669"/>
    <property type="project" value="UniProtKB-UniRule"/>
</dbReference>
<dbReference type="CDD" id="cd21671">
    <property type="entry name" value="SMP_Mmm1"/>
    <property type="match status" value="1"/>
</dbReference>
<dbReference type="HAMAP" id="MF_03103">
    <property type="entry name" value="Mmm1"/>
    <property type="match status" value="1"/>
</dbReference>
<dbReference type="InterPro" id="IPR027537">
    <property type="entry name" value="Mmm1"/>
</dbReference>
<dbReference type="InterPro" id="IPR019411">
    <property type="entry name" value="MMM1_dom"/>
</dbReference>
<dbReference type="InterPro" id="IPR031468">
    <property type="entry name" value="SMP_LBD"/>
</dbReference>
<dbReference type="PANTHER" id="PTHR13466:SF0">
    <property type="entry name" value="SMP-LTD DOMAIN-CONTAINING PROTEIN"/>
    <property type="match status" value="1"/>
</dbReference>
<dbReference type="PANTHER" id="PTHR13466">
    <property type="entry name" value="TEX2 PROTEIN-RELATED"/>
    <property type="match status" value="1"/>
</dbReference>
<dbReference type="Pfam" id="PF10296">
    <property type="entry name" value="MMM1"/>
    <property type="match status" value="1"/>
</dbReference>
<dbReference type="PROSITE" id="PS51847">
    <property type="entry name" value="SMP"/>
    <property type="match status" value="1"/>
</dbReference>
<gene>
    <name evidence="1" type="primary">MMM1</name>
    <name type="ORF">LELG_04270</name>
</gene>
<accession>A5E3T2</accession>
<reference key="1">
    <citation type="journal article" date="2009" name="Nature">
        <title>Evolution of pathogenicity and sexual reproduction in eight Candida genomes.</title>
        <authorList>
            <person name="Butler G."/>
            <person name="Rasmussen M.D."/>
            <person name="Lin M.F."/>
            <person name="Santos M.A.S."/>
            <person name="Sakthikumar S."/>
            <person name="Munro C.A."/>
            <person name="Rheinbay E."/>
            <person name="Grabherr M."/>
            <person name="Forche A."/>
            <person name="Reedy J.L."/>
            <person name="Agrafioti I."/>
            <person name="Arnaud M.B."/>
            <person name="Bates S."/>
            <person name="Brown A.J.P."/>
            <person name="Brunke S."/>
            <person name="Costanzo M.C."/>
            <person name="Fitzpatrick D.A."/>
            <person name="de Groot P.W.J."/>
            <person name="Harris D."/>
            <person name="Hoyer L.L."/>
            <person name="Hube B."/>
            <person name="Klis F.M."/>
            <person name="Kodira C."/>
            <person name="Lennard N."/>
            <person name="Logue M.E."/>
            <person name="Martin R."/>
            <person name="Neiman A.M."/>
            <person name="Nikolaou E."/>
            <person name="Quail M.A."/>
            <person name="Quinn J."/>
            <person name="Santos M.C."/>
            <person name="Schmitzberger F.F."/>
            <person name="Sherlock G."/>
            <person name="Shah P."/>
            <person name="Silverstein K.A.T."/>
            <person name="Skrzypek M.S."/>
            <person name="Soll D."/>
            <person name="Staggs R."/>
            <person name="Stansfield I."/>
            <person name="Stumpf M.P.H."/>
            <person name="Sudbery P.E."/>
            <person name="Srikantha T."/>
            <person name="Zeng Q."/>
            <person name="Berman J."/>
            <person name="Berriman M."/>
            <person name="Heitman J."/>
            <person name="Gow N.A.R."/>
            <person name="Lorenz M.C."/>
            <person name="Birren B.W."/>
            <person name="Kellis M."/>
            <person name="Cuomo C.A."/>
        </authorList>
    </citation>
    <scope>NUCLEOTIDE SEQUENCE [LARGE SCALE GENOMIC DNA]</scope>
    <source>
        <strain>ATCC 11503 / BCRC 21390 / CBS 2605 / JCM 1781 / NBRC 1676 / NRRL YB-4239</strain>
    </source>
</reference>
<name>MMM1_LODEL</name>
<organism>
    <name type="scientific">Lodderomyces elongisporus (strain ATCC 11503 / CBS 2605 / JCM 1781 / NBRC 1676 / NRRL YB-4239)</name>
    <name type="common">Yeast</name>
    <name type="synonym">Saccharomyces elongisporus</name>
    <dbReference type="NCBI Taxonomy" id="379508"/>
    <lineage>
        <taxon>Eukaryota</taxon>
        <taxon>Fungi</taxon>
        <taxon>Dikarya</taxon>
        <taxon>Ascomycota</taxon>
        <taxon>Saccharomycotina</taxon>
        <taxon>Pichiomycetes</taxon>
        <taxon>Debaryomycetaceae</taxon>
        <taxon>Candida/Lodderomyces clade</taxon>
        <taxon>Lodderomyces</taxon>
    </lineage>
</organism>
<comment type="function">
    <text evidence="1">Component of the ERMES/MDM complex, which serves as a molecular tether to connect the endoplasmic reticulum (ER) and mitochondria. Components of this complex are involved in the control of mitochondrial shape and protein biogenesis, and function in nonvesicular lipid trafficking between the ER and mitochondria. The MDM12-MMM1 subcomplex functions in the major beta-barrel assembly pathway that is responsible for biogenesis of all outer membrane beta-barrel proteins, and acts in a late step after the SAM complex. The MDM10-MDM12-MMM1 subcomplex further acts in the TOM40-specific pathway after the action of the MDM12-MMM1 complex. Essential for establishing and maintaining the structure of mitochondria and maintenance of mtDNA nucleoids.</text>
</comment>
<comment type="subunit">
    <text evidence="1">Homodimer. Component of the ER-mitochondria encounter structure (ERMES) or MDM complex, composed of MMM1, MDM10, MDM12 and MDM34. A MMM1 homodimer associates with one molecule of MDM12 on each side in a pairwise head-to-tail manner, and the SMP-LTD domains of MMM1 and MDM12 generate a continuous hydrophobic tunnel for phospholipid trafficking.</text>
</comment>
<comment type="subcellular location">
    <subcellularLocation>
        <location evidence="1">Endoplasmic reticulum membrane</location>
        <topology evidence="1">Single-pass type I membrane protein</topology>
    </subcellularLocation>
    <text evidence="1">The ERMES/MDM complex localizes to a few discrete foci (around 10 per single cell), that represent mitochondria-endoplasmic reticulum junctions. These foci are often found next to mtDNA nucleoids.</text>
</comment>
<comment type="domain">
    <text evidence="1">The SMP-LTD domain is a barrel-like domain that can bind various types of glycerophospholipids in its interior and mediate their transfer between two adjacent bilayers.</text>
</comment>
<comment type="similarity">
    <text evidence="1">Belongs to the MMM1 family.</text>
</comment>